<feature type="chain" id="PRO_0000285635" description="rRNA-processing protein UTP23 homolog">
    <location>
        <begin position="1"/>
        <end position="249"/>
    </location>
</feature>
<feature type="region of interest" description="Disordered" evidence="3">
    <location>
        <begin position="180"/>
        <end position="249"/>
    </location>
</feature>
<feature type="compositionally biased region" description="Basic residues" evidence="3">
    <location>
        <begin position="191"/>
        <end position="200"/>
    </location>
</feature>
<feature type="compositionally biased region" description="Basic residues" evidence="3">
    <location>
        <begin position="225"/>
        <end position="236"/>
    </location>
</feature>
<feature type="compositionally biased region" description="Polar residues" evidence="3">
    <location>
        <begin position="237"/>
        <end position="249"/>
    </location>
</feature>
<feature type="modified residue" description="Phosphoserine" evidence="2">
    <location>
        <position position="174"/>
    </location>
</feature>
<feature type="cross-link" description="Glycyl lysine isopeptide (Lys-Gly) (interchain with G-Cter in SUMO2)" evidence="2">
    <location>
        <position position="179"/>
    </location>
</feature>
<feature type="sequence conflict" description="In Ref. 1; BAC31281." evidence="4" ref="1">
    <original>P</original>
    <variation>H</variation>
    <location>
        <position position="50"/>
    </location>
</feature>
<keyword id="KW-1017">Isopeptide bond</keyword>
<keyword id="KW-0539">Nucleus</keyword>
<keyword id="KW-0597">Phosphoprotein</keyword>
<keyword id="KW-1185">Reference proteome</keyword>
<keyword id="KW-0690">Ribosome biogenesis</keyword>
<keyword id="KW-0698">rRNA processing</keyword>
<keyword id="KW-0832">Ubl conjugation</keyword>
<proteinExistence type="evidence at transcript level"/>
<accession>Q9CX11</accession>
<accession>Q8BY14</accession>
<name>UTP23_MOUSE</name>
<gene>
    <name type="primary">Utp23</name>
</gene>
<dbReference type="EMBL" id="AK021306">
    <property type="protein sequence ID" value="BAB32368.1"/>
    <property type="molecule type" value="mRNA"/>
</dbReference>
<dbReference type="EMBL" id="AK042518">
    <property type="protein sequence ID" value="BAC31281.1"/>
    <property type="molecule type" value="mRNA"/>
</dbReference>
<dbReference type="EMBL" id="AK134445">
    <property type="protein sequence ID" value="BAE22147.1"/>
    <property type="molecule type" value="mRNA"/>
</dbReference>
<dbReference type="EMBL" id="BC046791">
    <property type="protein sequence ID" value="AAH46791.1"/>
    <property type="molecule type" value="mRNA"/>
</dbReference>
<dbReference type="EMBL" id="BC056961">
    <property type="protein sequence ID" value="AAH56961.1"/>
    <property type="molecule type" value="mRNA"/>
</dbReference>
<dbReference type="CCDS" id="CCDS27462.1"/>
<dbReference type="RefSeq" id="NP_084408.1">
    <property type="nucleotide sequence ID" value="NM_030132.5"/>
</dbReference>
<dbReference type="SMR" id="Q9CX11"/>
<dbReference type="BioGRID" id="219498">
    <property type="interactions" value="1"/>
</dbReference>
<dbReference type="FunCoup" id="Q9CX11">
    <property type="interactions" value="2980"/>
</dbReference>
<dbReference type="STRING" id="10090.ENSMUSP00000119261"/>
<dbReference type="PhosphoSitePlus" id="Q9CX11"/>
<dbReference type="PaxDb" id="10090-ENSMUSP00000119261"/>
<dbReference type="PeptideAtlas" id="Q9CX11"/>
<dbReference type="ProteomicsDB" id="300205"/>
<dbReference type="Pumba" id="Q9CX11"/>
<dbReference type="Antibodypedia" id="42960">
    <property type="antibodies" value="75 antibodies from 16 providers"/>
</dbReference>
<dbReference type="Ensembl" id="ENSMUST00000137116.3">
    <property type="protein sequence ID" value="ENSMUSP00000119261.3"/>
    <property type="gene ID" value="ENSMUSG00000022313.11"/>
</dbReference>
<dbReference type="GeneID" id="78581"/>
<dbReference type="KEGG" id="mmu:78581"/>
<dbReference type="UCSC" id="uc007vrc.2">
    <property type="organism name" value="mouse"/>
</dbReference>
<dbReference type="AGR" id="MGI:1925831"/>
<dbReference type="CTD" id="84294"/>
<dbReference type="MGI" id="MGI:1925831">
    <property type="gene designation" value="Utp23"/>
</dbReference>
<dbReference type="VEuPathDB" id="HostDB:ENSMUSG00000022313"/>
<dbReference type="eggNOG" id="KOG3164">
    <property type="taxonomic scope" value="Eukaryota"/>
</dbReference>
<dbReference type="GeneTree" id="ENSGT00940000153117"/>
<dbReference type="HOGENOM" id="CLU_053567_3_0_1"/>
<dbReference type="InParanoid" id="Q9CX11"/>
<dbReference type="OMA" id="CCMQALY"/>
<dbReference type="OrthoDB" id="25675at2759"/>
<dbReference type="PhylomeDB" id="Q9CX11"/>
<dbReference type="TreeFam" id="TF105804"/>
<dbReference type="BioGRID-ORCS" id="78581">
    <property type="hits" value="25 hits in 76 CRISPR screens"/>
</dbReference>
<dbReference type="ChiTaRS" id="Utp23">
    <property type="organism name" value="mouse"/>
</dbReference>
<dbReference type="PRO" id="PR:Q9CX11"/>
<dbReference type="Proteomes" id="UP000000589">
    <property type="component" value="Chromosome 15"/>
</dbReference>
<dbReference type="RNAct" id="Q9CX11">
    <property type="molecule type" value="protein"/>
</dbReference>
<dbReference type="Bgee" id="ENSMUSG00000022313">
    <property type="expression patterns" value="Expressed in cleaving embryo and 231 other cell types or tissues"/>
</dbReference>
<dbReference type="ExpressionAtlas" id="Q9CX11">
    <property type="expression patterns" value="baseline and differential"/>
</dbReference>
<dbReference type="GO" id="GO:0005730">
    <property type="term" value="C:nucleolus"/>
    <property type="evidence" value="ECO:0007669"/>
    <property type="project" value="UniProtKB-SubCell"/>
</dbReference>
<dbReference type="GO" id="GO:0032040">
    <property type="term" value="C:small-subunit processome"/>
    <property type="evidence" value="ECO:0007669"/>
    <property type="project" value="InterPro"/>
</dbReference>
<dbReference type="GO" id="GO:0003730">
    <property type="term" value="F:mRNA 3'-UTR binding"/>
    <property type="evidence" value="ECO:0007669"/>
    <property type="project" value="Ensembl"/>
</dbReference>
<dbReference type="GO" id="GO:0048027">
    <property type="term" value="F:mRNA 5'-UTR binding"/>
    <property type="evidence" value="ECO:0007669"/>
    <property type="project" value="Ensembl"/>
</dbReference>
<dbReference type="GO" id="GO:0000480">
    <property type="term" value="P:endonucleolytic cleavage in 5'-ETS of tricistronic rRNA transcript (SSU-rRNA, 5.8S rRNA, LSU-rRNA)"/>
    <property type="evidence" value="ECO:0000315"/>
    <property type="project" value="MGI"/>
</dbReference>
<dbReference type="CDD" id="cd09866">
    <property type="entry name" value="PIN_Fcf1-Utp23-H"/>
    <property type="match status" value="1"/>
</dbReference>
<dbReference type="FunFam" id="3.40.50.1010:FF:000006">
    <property type="entry name" value="rRNA-processing protein UTP23 homolog"/>
    <property type="match status" value="1"/>
</dbReference>
<dbReference type="Gene3D" id="3.40.50.1010">
    <property type="entry name" value="5'-nuclease"/>
    <property type="match status" value="1"/>
</dbReference>
<dbReference type="InterPro" id="IPR006984">
    <property type="entry name" value="Fcf1/Utp23"/>
</dbReference>
<dbReference type="InterPro" id="IPR029060">
    <property type="entry name" value="PIN-like_dom_sf"/>
</dbReference>
<dbReference type="PANTHER" id="PTHR12416">
    <property type="entry name" value="RRNA-PROCESSING PROTEIN UTP23 HOMOLOG"/>
    <property type="match status" value="1"/>
</dbReference>
<dbReference type="Pfam" id="PF04900">
    <property type="entry name" value="Fcf1"/>
    <property type="match status" value="1"/>
</dbReference>
<dbReference type="Pfam" id="PF24779">
    <property type="entry name" value="UTP23_sensor"/>
    <property type="match status" value="1"/>
</dbReference>
<dbReference type="SUPFAM" id="SSF88723">
    <property type="entry name" value="PIN domain-like"/>
    <property type="match status" value="1"/>
</dbReference>
<protein>
    <recommendedName>
        <fullName>rRNA-processing protein UTP23 homolog</fullName>
    </recommendedName>
</protein>
<evidence type="ECO:0000250" key="1"/>
<evidence type="ECO:0000250" key="2">
    <source>
        <dbReference type="UniProtKB" id="Q9BRU9"/>
    </source>
</evidence>
<evidence type="ECO:0000256" key="3">
    <source>
        <dbReference type="SAM" id="MobiDB-lite"/>
    </source>
</evidence>
<evidence type="ECO:0000305" key="4"/>
<reference key="1">
    <citation type="journal article" date="2005" name="Science">
        <title>The transcriptional landscape of the mammalian genome.</title>
        <authorList>
            <person name="Carninci P."/>
            <person name="Kasukawa T."/>
            <person name="Katayama S."/>
            <person name="Gough J."/>
            <person name="Frith M.C."/>
            <person name="Maeda N."/>
            <person name="Oyama R."/>
            <person name="Ravasi T."/>
            <person name="Lenhard B."/>
            <person name="Wells C."/>
            <person name="Kodzius R."/>
            <person name="Shimokawa K."/>
            <person name="Bajic V.B."/>
            <person name="Brenner S.E."/>
            <person name="Batalov S."/>
            <person name="Forrest A.R."/>
            <person name="Zavolan M."/>
            <person name="Davis M.J."/>
            <person name="Wilming L.G."/>
            <person name="Aidinis V."/>
            <person name="Allen J.E."/>
            <person name="Ambesi-Impiombato A."/>
            <person name="Apweiler R."/>
            <person name="Aturaliya R.N."/>
            <person name="Bailey T.L."/>
            <person name="Bansal M."/>
            <person name="Baxter L."/>
            <person name="Beisel K.W."/>
            <person name="Bersano T."/>
            <person name="Bono H."/>
            <person name="Chalk A.M."/>
            <person name="Chiu K.P."/>
            <person name="Choudhary V."/>
            <person name="Christoffels A."/>
            <person name="Clutterbuck D.R."/>
            <person name="Crowe M.L."/>
            <person name="Dalla E."/>
            <person name="Dalrymple B.P."/>
            <person name="de Bono B."/>
            <person name="Della Gatta G."/>
            <person name="di Bernardo D."/>
            <person name="Down T."/>
            <person name="Engstrom P."/>
            <person name="Fagiolini M."/>
            <person name="Faulkner G."/>
            <person name="Fletcher C.F."/>
            <person name="Fukushima T."/>
            <person name="Furuno M."/>
            <person name="Futaki S."/>
            <person name="Gariboldi M."/>
            <person name="Georgii-Hemming P."/>
            <person name="Gingeras T.R."/>
            <person name="Gojobori T."/>
            <person name="Green R.E."/>
            <person name="Gustincich S."/>
            <person name="Harbers M."/>
            <person name="Hayashi Y."/>
            <person name="Hensch T.K."/>
            <person name="Hirokawa N."/>
            <person name="Hill D."/>
            <person name="Huminiecki L."/>
            <person name="Iacono M."/>
            <person name="Ikeo K."/>
            <person name="Iwama A."/>
            <person name="Ishikawa T."/>
            <person name="Jakt M."/>
            <person name="Kanapin A."/>
            <person name="Katoh M."/>
            <person name="Kawasawa Y."/>
            <person name="Kelso J."/>
            <person name="Kitamura H."/>
            <person name="Kitano H."/>
            <person name="Kollias G."/>
            <person name="Krishnan S.P."/>
            <person name="Kruger A."/>
            <person name="Kummerfeld S.K."/>
            <person name="Kurochkin I.V."/>
            <person name="Lareau L.F."/>
            <person name="Lazarevic D."/>
            <person name="Lipovich L."/>
            <person name="Liu J."/>
            <person name="Liuni S."/>
            <person name="McWilliam S."/>
            <person name="Madan Babu M."/>
            <person name="Madera M."/>
            <person name="Marchionni L."/>
            <person name="Matsuda H."/>
            <person name="Matsuzawa S."/>
            <person name="Miki H."/>
            <person name="Mignone F."/>
            <person name="Miyake S."/>
            <person name="Morris K."/>
            <person name="Mottagui-Tabar S."/>
            <person name="Mulder N."/>
            <person name="Nakano N."/>
            <person name="Nakauchi H."/>
            <person name="Ng P."/>
            <person name="Nilsson R."/>
            <person name="Nishiguchi S."/>
            <person name="Nishikawa S."/>
            <person name="Nori F."/>
            <person name="Ohara O."/>
            <person name="Okazaki Y."/>
            <person name="Orlando V."/>
            <person name="Pang K.C."/>
            <person name="Pavan W.J."/>
            <person name="Pavesi G."/>
            <person name="Pesole G."/>
            <person name="Petrovsky N."/>
            <person name="Piazza S."/>
            <person name="Reed J."/>
            <person name="Reid J.F."/>
            <person name="Ring B.Z."/>
            <person name="Ringwald M."/>
            <person name="Rost B."/>
            <person name="Ruan Y."/>
            <person name="Salzberg S.L."/>
            <person name="Sandelin A."/>
            <person name="Schneider C."/>
            <person name="Schoenbach C."/>
            <person name="Sekiguchi K."/>
            <person name="Semple C.A."/>
            <person name="Seno S."/>
            <person name="Sessa L."/>
            <person name="Sheng Y."/>
            <person name="Shibata Y."/>
            <person name="Shimada H."/>
            <person name="Shimada K."/>
            <person name="Silva D."/>
            <person name="Sinclair B."/>
            <person name="Sperling S."/>
            <person name="Stupka E."/>
            <person name="Sugiura K."/>
            <person name="Sultana R."/>
            <person name="Takenaka Y."/>
            <person name="Taki K."/>
            <person name="Tammoja K."/>
            <person name="Tan S.L."/>
            <person name="Tang S."/>
            <person name="Taylor M.S."/>
            <person name="Tegner J."/>
            <person name="Teichmann S.A."/>
            <person name="Ueda H.R."/>
            <person name="van Nimwegen E."/>
            <person name="Verardo R."/>
            <person name="Wei C.L."/>
            <person name="Yagi K."/>
            <person name="Yamanishi H."/>
            <person name="Zabarovsky E."/>
            <person name="Zhu S."/>
            <person name="Zimmer A."/>
            <person name="Hide W."/>
            <person name="Bult C."/>
            <person name="Grimmond S.M."/>
            <person name="Teasdale R.D."/>
            <person name="Liu E.T."/>
            <person name="Brusic V."/>
            <person name="Quackenbush J."/>
            <person name="Wahlestedt C."/>
            <person name="Mattick J.S."/>
            <person name="Hume D.A."/>
            <person name="Kai C."/>
            <person name="Sasaki D."/>
            <person name="Tomaru Y."/>
            <person name="Fukuda S."/>
            <person name="Kanamori-Katayama M."/>
            <person name="Suzuki M."/>
            <person name="Aoki J."/>
            <person name="Arakawa T."/>
            <person name="Iida J."/>
            <person name="Imamura K."/>
            <person name="Itoh M."/>
            <person name="Kato T."/>
            <person name="Kawaji H."/>
            <person name="Kawagashira N."/>
            <person name="Kawashima T."/>
            <person name="Kojima M."/>
            <person name="Kondo S."/>
            <person name="Konno H."/>
            <person name="Nakano K."/>
            <person name="Ninomiya N."/>
            <person name="Nishio T."/>
            <person name="Okada M."/>
            <person name="Plessy C."/>
            <person name="Shibata K."/>
            <person name="Shiraki T."/>
            <person name="Suzuki S."/>
            <person name="Tagami M."/>
            <person name="Waki K."/>
            <person name="Watahiki A."/>
            <person name="Okamura-Oho Y."/>
            <person name="Suzuki H."/>
            <person name="Kawai J."/>
            <person name="Hayashizaki Y."/>
        </authorList>
    </citation>
    <scope>NUCLEOTIDE SEQUENCE [LARGE SCALE MRNA]</scope>
    <source>
        <strain>C57BL/6J</strain>
        <tissue>Stomach</tissue>
        <tissue>Testis</tissue>
        <tissue>Thymus</tissue>
    </source>
</reference>
<reference key="2">
    <citation type="journal article" date="2004" name="Genome Res.">
        <title>The status, quality, and expansion of the NIH full-length cDNA project: the Mammalian Gene Collection (MGC).</title>
        <authorList>
            <consortium name="The MGC Project Team"/>
        </authorList>
    </citation>
    <scope>NUCLEOTIDE SEQUENCE [LARGE SCALE MRNA]</scope>
    <source>
        <strain>C57BL/6J</strain>
        <tissue>Brain</tissue>
    </source>
</reference>
<sequence length="249" mass="28380">MKITRQKHAKKHLGFFRNNFGVREPYQILLDGTFCQAALRGRIQLRDQLPRYLMGETQLCTTRCVLKELETLGKELYGAKLIAQKCQVRNCPHFKSPVSGSECLLSMVDEGNPHHYFVATQDQNLSVKVKRTPGIPLMFIIQNTIVLDKPSPRTVAFVKAVEAGQLVSVHEKQSIKQLKEEQGLVRNPDLRRRRRKKKKVGGPNPLSCLKKKKKAQDTKSPASEKKRKRKRIRNRSTLKVSSEQQGAEG</sequence>
<organism>
    <name type="scientific">Mus musculus</name>
    <name type="common">Mouse</name>
    <dbReference type="NCBI Taxonomy" id="10090"/>
    <lineage>
        <taxon>Eukaryota</taxon>
        <taxon>Metazoa</taxon>
        <taxon>Chordata</taxon>
        <taxon>Craniata</taxon>
        <taxon>Vertebrata</taxon>
        <taxon>Euteleostomi</taxon>
        <taxon>Mammalia</taxon>
        <taxon>Eutheria</taxon>
        <taxon>Euarchontoglires</taxon>
        <taxon>Glires</taxon>
        <taxon>Rodentia</taxon>
        <taxon>Myomorpha</taxon>
        <taxon>Muroidea</taxon>
        <taxon>Muridae</taxon>
        <taxon>Murinae</taxon>
        <taxon>Mus</taxon>
        <taxon>Mus</taxon>
    </lineage>
</organism>
<comment type="function">
    <text evidence="1">Involved in rRNA-processing and ribosome biogenesis.</text>
</comment>
<comment type="subcellular location">
    <subcellularLocation>
        <location evidence="1">Nucleus</location>
        <location evidence="1">Nucleolus</location>
    </subcellularLocation>
</comment>
<comment type="similarity">
    <text evidence="4">Belongs to the UTP23/FCF1 family. UTP23 subfamily.</text>
</comment>